<comment type="function">
    <text evidence="1">This is one of the proteins that bind and probably mediate the attachment of the 5S RNA into the large ribosomal subunit, where it forms part of the central protuberance. In the 70S ribosome it contacts protein S13 of the 30S subunit (bridge B1b), connecting the 2 subunits; this bridge is implicated in subunit movement. Contacts the P site tRNA; the 5S rRNA and some of its associated proteins might help stabilize positioning of ribosome-bound tRNAs.</text>
</comment>
<comment type="subunit">
    <text evidence="1">Part of the 50S ribosomal subunit; part of the 5S rRNA/L5/L18/L25 subcomplex. Contacts the 5S rRNA and the P site tRNA. Forms a bridge to the 30S subunit in the 70S ribosome.</text>
</comment>
<comment type="similarity">
    <text evidence="1">Belongs to the universal ribosomal protein uL5 family.</text>
</comment>
<organism>
    <name type="scientific">Enterobacter sp. (strain 638)</name>
    <dbReference type="NCBI Taxonomy" id="399742"/>
    <lineage>
        <taxon>Bacteria</taxon>
        <taxon>Pseudomonadati</taxon>
        <taxon>Pseudomonadota</taxon>
        <taxon>Gammaproteobacteria</taxon>
        <taxon>Enterobacterales</taxon>
        <taxon>Enterobacteriaceae</taxon>
        <taxon>Enterobacter</taxon>
    </lineage>
</organism>
<evidence type="ECO:0000255" key="1">
    <source>
        <dbReference type="HAMAP-Rule" id="MF_01333"/>
    </source>
</evidence>
<evidence type="ECO:0000305" key="2"/>
<feature type="chain" id="PRO_1000067620" description="Large ribosomal subunit protein uL5">
    <location>
        <begin position="1"/>
        <end position="179"/>
    </location>
</feature>
<protein>
    <recommendedName>
        <fullName evidence="1">Large ribosomal subunit protein uL5</fullName>
    </recommendedName>
    <alternativeName>
        <fullName evidence="2">50S ribosomal protein L5</fullName>
    </alternativeName>
</protein>
<proteinExistence type="inferred from homology"/>
<dbReference type="EMBL" id="CP000653">
    <property type="protein sequence ID" value="ABP62396.1"/>
    <property type="molecule type" value="Genomic_DNA"/>
</dbReference>
<dbReference type="RefSeq" id="WP_015960710.1">
    <property type="nucleotide sequence ID" value="NC_009436.1"/>
</dbReference>
<dbReference type="SMR" id="A4WFB6"/>
<dbReference type="STRING" id="399742.Ent638_3739"/>
<dbReference type="GeneID" id="97603657"/>
<dbReference type="KEGG" id="ent:Ent638_3739"/>
<dbReference type="eggNOG" id="COG0094">
    <property type="taxonomic scope" value="Bacteria"/>
</dbReference>
<dbReference type="HOGENOM" id="CLU_061015_2_1_6"/>
<dbReference type="OrthoDB" id="9806626at2"/>
<dbReference type="Proteomes" id="UP000000230">
    <property type="component" value="Chromosome"/>
</dbReference>
<dbReference type="GO" id="GO:1990904">
    <property type="term" value="C:ribonucleoprotein complex"/>
    <property type="evidence" value="ECO:0007669"/>
    <property type="project" value="UniProtKB-KW"/>
</dbReference>
<dbReference type="GO" id="GO:0005840">
    <property type="term" value="C:ribosome"/>
    <property type="evidence" value="ECO:0007669"/>
    <property type="project" value="UniProtKB-KW"/>
</dbReference>
<dbReference type="GO" id="GO:0019843">
    <property type="term" value="F:rRNA binding"/>
    <property type="evidence" value="ECO:0007669"/>
    <property type="project" value="UniProtKB-UniRule"/>
</dbReference>
<dbReference type="GO" id="GO:0003735">
    <property type="term" value="F:structural constituent of ribosome"/>
    <property type="evidence" value="ECO:0007669"/>
    <property type="project" value="InterPro"/>
</dbReference>
<dbReference type="GO" id="GO:0000049">
    <property type="term" value="F:tRNA binding"/>
    <property type="evidence" value="ECO:0007669"/>
    <property type="project" value="UniProtKB-UniRule"/>
</dbReference>
<dbReference type="GO" id="GO:0006412">
    <property type="term" value="P:translation"/>
    <property type="evidence" value="ECO:0007669"/>
    <property type="project" value="UniProtKB-UniRule"/>
</dbReference>
<dbReference type="FunFam" id="3.30.1440.10:FF:000001">
    <property type="entry name" value="50S ribosomal protein L5"/>
    <property type="match status" value="1"/>
</dbReference>
<dbReference type="Gene3D" id="3.30.1440.10">
    <property type="match status" value="1"/>
</dbReference>
<dbReference type="HAMAP" id="MF_01333_B">
    <property type="entry name" value="Ribosomal_uL5_B"/>
    <property type="match status" value="1"/>
</dbReference>
<dbReference type="InterPro" id="IPR002132">
    <property type="entry name" value="Ribosomal_uL5"/>
</dbReference>
<dbReference type="InterPro" id="IPR020930">
    <property type="entry name" value="Ribosomal_uL5_bac-type"/>
</dbReference>
<dbReference type="InterPro" id="IPR031309">
    <property type="entry name" value="Ribosomal_uL5_C"/>
</dbReference>
<dbReference type="InterPro" id="IPR020929">
    <property type="entry name" value="Ribosomal_uL5_CS"/>
</dbReference>
<dbReference type="InterPro" id="IPR022803">
    <property type="entry name" value="Ribosomal_uL5_dom_sf"/>
</dbReference>
<dbReference type="InterPro" id="IPR031310">
    <property type="entry name" value="Ribosomal_uL5_N"/>
</dbReference>
<dbReference type="NCBIfam" id="NF000585">
    <property type="entry name" value="PRK00010.1"/>
    <property type="match status" value="1"/>
</dbReference>
<dbReference type="PANTHER" id="PTHR11994">
    <property type="entry name" value="60S RIBOSOMAL PROTEIN L11-RELATED"/>
    <property type="match status" value="1"/>
</dbReference>
<dbReference type="Pfam" id="PF00281">
    <property type="entry name" value="Ribosomal_L5"/>
    <property type="match status" value="1"/>
</dbReference>
<dbReference type="Pfam" id="PF00673">
    <property type="entry name" value="Ribosomal_L5_C"/>
    <property type="match status" value="1"/>
</dbReference>
<dbReference type="PIRSF" id="PIRSF002161">
    <property type="entry name" value="Ribosomal_L5"/>
    <property type="match status" value="1"/>
</dbReference>
<dbReference type="SUPFAM" id="SSF55282">
    <property type="entry name" value="RL5-like"/>
    <property type="match status" value="1"/>
</dbReference>
<dbReference type="PROSITE" id="PS00358">
    <property type="entry name" value="RIBOSOMAL_L5"/>
    <property type="match status" value="1"/>
</dbReference>
<reference key="1">
    <citation type="journal article" date="2010" name="PLoS Genet.">
        <title>Genome sequence of the plant growth promoting endophytic bacterium Enterobacter sp. 638.</title>
        <authorList>
            <person name="Taghavi S."/>
            <person name="van der Lelie D."/>
            <person name="Hoffman A."/>
            <person name="Zhang Y.B."/>
            <person name="Walla M.D."/>
            <person name="Vangronsveld J."/>
            <person name="Newman L."/>
            <person name="Monchy S."/>
        </authorList>
    </citation>
    <scope>NUCLEOTIDE SEQUENCE [LARGE SCALE GENOMIC DNA]</scope>
    <source>
        <strain>638</strain>
    </source>
</reference>
<gene>
    <name evidence="1" type="primary">rplE</name>
    <name type="ordered locus">Ent638_3739</name>
</gene>
<sequence>MAKLHDYYKDEVVSKLMTEFNYNSVMQVPRVEKITLNMGVGEAIADKKLLDNAAADLTAISGQKPLITKARKSVAGFKIRQGYPIGCKVTLRGERMWEFLERLISIAVPRIRDFRGLSAKSFDGRGNYSMGVREQIIFPEIDYDKVDRVRGLDITITTTANSDEEGRALLAAFDFPFRK</sequence>
<accession>A4WFB6</accession>
<name>RL5_ENT38</name>
<keyword id="KW-0687">Ribonucleoprotein</keyword>
<keyword id="KW-0689">Ribosomal protein</keyword>
<keyword id="KW-0694">RNA-binding</keyword>
<keyword id="KW-0699">rRNA-binding</keyword>
<keyword id="KW-0820">tRNA-binding</keyword>